<organism>
    <name type="scientific">Mycoplasma mycoides subsp. mycoides SC (strain CCUG 32753 / NCTC 10114 / PG1)</name>
    <dbReference type="NCBI Taxonomy" id="272632"/>
    <lineage>
        <taxon>Bacteria</taxon>
        <taxon>Bacillati</taxon>
        <taxon>Mycoplasmatota</taxon>
        <taxon>Mollicutes</taxon>
        <taxon>Mycoplasmataceae</taxon>
        <taxon>Mycoplasma</taxon>
    </lineage>
</organism>
<gene>
    <name evidence="1" type="primary">proS</name>
    <name type="ordered locus">MSC_0327</name>
</gene>
<comment type="function">
    <text evidence="1">Catalyzes the attachment of proline to tRNA(Pro) in a two-step reaction: proline is first activated by ATP to form Pro-AMP and then transferred to the acceptor end of tRNA(Pro).</text>
</comment>
<comment type="catalytic activity">
    <reaction evidence="1">
        <text>tRNA(Pro) + L-proline + ATP = L-prolyl-tRNA(Pro) + AMP + diphosphate</text>
        <dbReference type="Rhea" id="RHEA:14305"/>
        <dbReference type="Rhea" id="RHEA-COMP:9700"/>
        <dbReference type="Rhea" id="RHEA-COMP:9702"/>
        <dbReference type="ChEBI" id="CHEBI:30616"/>
        <dbReference type="ChEBI" id="CHEBI:33019"/>
        <dbReference type="ChEBI" id="CHEBI:60039"/>
        <dbReference type="ChEBI" id="CHEBI:78442"/>
        <dbReference type="ChEBI" id="CHEBI:78532"/>
        <dbReference type="ChEBI" id="CHEBI:456215"/>
        <dbReference type="EC" id="6.1.1.15"/>
    </reaction>
</comment>
<comment type="subunit">
    <text evidence="1">Homodimer.</text>
</comment>
<comment type="subcellular location">
    <subcellularLocation>
        <location evidence="1">Cytoplasm</location>
    </subcellularLocation>
</comment>
<comment type="domain">
    <text evidence="1">Consists of three domains: the N-terminal catalytic domain, the anticodon-binding domain and the C-terminal extension.</text>
</comment>
<comment type="similarity">
    <text evidence="1">Belongs to the class-II aminoacyl-tRNA synthetase family. ProS type 3 subfamily.</text>
</comment>
<reference key="1">
    <citation type="journal article" date="2004" name="Genome Res.">
        <title>The genome sequence of Mycoplasma mycoides subsp. mycoides SC type strain PG1T, the causative agent of contagious bovine pleuropneumonia (CBPP).</title>
        <authorList>
            <person name="Westberg J."/>
            <person name="Persson A."/>
            <person name="Holmberg A."/>
            <person name="Goesmann A."/>
            <person name="Lundeberg J."/>
            <person name="Johansson K.-E."/>
            <person name="Pettersson B."/>
            <person name="Uhlen M."/>
        </authorList>
    </citation>
    <scope>NUCLEOTIDE SEQUENCE [LARGE SCALE GENOMIC DNA]</scope>
    <source>
        <strain>CCUG 32753 / NCTC 10114 / PG1</strain>
    </source>
</reference>
<feature type="chain" id="PRO_0000249138" description="Proline--tRNA ligase">
    <location>
        <begin position="1"/>
        <end position="474"/>
    </location>
</feature>
<dbReference type="EC" id="6.1.1.15" evidence="1"/>
<dbReference type="EMBL" id="BX293980">
    <property type="protein sequence ID" value="CAE76967.1"/>
    <property type="molecule type" value="Genomic_DNA"/>
</dbReference>
<dbReference type="RefSeq" id="NP_975325.1">
    <property type="nucleotide sequence ID" value="NC_005364.2"/>
</dbReference>
<dbReference type="RefSeq" id="WP_011166523.1">
    <property type="nucleotide sequence ID" value="NC_005364.2"/>
</dbReference>
<dbReference type="SMR" id="Q6MTR9"/>
<dbReference type="STRING" id="272632.MSC_0327"/>
<dbReference type="KEGG" id="mmy:MSC_0327"/>
<dbReference type="PATRIC" id="fig|272632.4.peg.353"/>
<dbReference type="eggNOG" id="COG0441">
    <property type="taxonomic scope" value="Bacteria"/>
</dbReference>
<dbReference type="HOGENOM" id="CLU_001882_4_2_14"/>
<dbReference type="Proteomes" id="UP000001016">
    <property type="component" value="Chromosome"/>
</dbReference>
<dbReference type="GO" id="GO:0017101">
    <property type="term" value="C:aminoacyl-tRNA synthetase multienzyme complex"/>
    <property type="evidence" value="ECO:0007669"/>
    <property type="project" value="TreeGrafter"/>
</dbReference>
<dbReference type="GO" id="GO:0005737">
    <property type="term" value="C:cytoplasm"/>
    <property type="evidence" value="ECO:0007669"/>
    <property type="project" value="UniProtKB-SubCell"/>
</dbReference>
<dbReference type="GO" id="GO:0005524">
    <property type="term" value="F:ATP binding"/>
    <property type="evidence" value="ECO:0007669"/>
    <property type="project" value="UniProtKB-UniRule"/>
</dbReference>
<dbReference type="GO" id="GO:0004827">
    <property type="term" value="F:proline-tRNA ligase activity"/>
    <property type="evidence" value="ECO:0007669"/>
    <property type="project" value="UniProtKB-UniRule"/>
</dbReference>
<dbReference type="GO" id="GO:0006433">
    <property type="term" value="P:prolyl-tRNA aminoacylation"/>
    <property type="evidence" value="ECO:0007669"/>
    <property type="project" value="UniProtKB-UniRule"/>
</dbReference>
<dbReference type="CDD" id="cd00778">
    <property type="entry name" value="ProRS_core_arch_euk"/>
    <property type="match status" value="1"/>
</dbReference>
<dbReference type="FunFam" id="3.30.930.10:FF:000037">
    <property type="entry name" value="Proline--tRNA ligase"/>
    <property type="match status" value="1"/>
</dbReference>
<dbReference type="Gene3D" id="3.40.50.800">
    <property type="entry name" value="Anticodon-binding domain"/>
    <property type="match status" value="1"/>
</dbReference>
<dbReference type="Gene3D" id="3.30.930.10">
    <property type="entry name" value="Bira Bifunctional Protein, Domain 2"/>
    <property type="match status" value="1"/>
</dbReference>
<dbReference type="Gene3D" id="3.30.110.30">
    <property type="entry name" value="C-terminal domain of ProRS"/>
    <property type="match status" value="1"/>
</dbReference>
<dbReference type="HAMAP" id="MF_01571">
    <property type="entry name" value="Pro_tRNA_synth_type3"/>
    <property type="match status" value="1"/>
</dbReference>
<dbReference type="InterPro" id="IPR002314">
    <property type="entry name" value="aa-tRNA-synt_IIb"/>
</dbReference>
<dbReference type="InterPro" id="IPR006195">
    <property type="entry name" value="aa-tRNA-synth_II"/>
</dbReference>
<dbReference type="InterPro" id="IPR045864">
    <property type="entry name" value="aa-tRNA-synth_II/BPL/LPL"/>
</dbReference>
<dbReference type="InterPro" id="IPR004154">
    <property type="entry name" value="Anticodon-bd"/>
</dbReference>
<dbReference type="InterPro" id="IPR036621">
    <property type="entry name" value="Anticodon-bd_dom_sf"/>
</dbReference>
<dbReference type="InterPro" id="IPR002316">
    <property type="entry name" value="Pro-tRNA-ligase_IIa"/>
</dbReference>
<dbReference type="InterPro" id="IPR004499">
    <property type="entry name" value="Pro-tRNA-ligase_IIa_arc-type"/>
</dbReference>
<dbReference type="InterPro" id="IPR016061">
    <property type="entry name" value="Pro-tRNA_ligase_II_C"/>
</dbReference>
<dbReference type="InterPro" id="IPR017449">
    <property type="entry name" value="Pro-tRNA_synth_II"/>
</dbReference>
<dbReference type="InterPro" id="IPR033721">
    <property type="entry name" value="ProRS_core_arch_euk"/>
</dbReference>
<dbReference type="NCBIfam" id="TIGR00408">
    <property type="entry name" value="proS_fam_I"/>
    <property type="match status" value="1"/>
</dbReference>
<dbReference type="PANTHER" id="PTHR43382:SF2">
    <property type="entry name" value="BIFUNCTIONAL GLUTAMATE_PROLINE--TRNA LIGASE"/>
    <property type="match status" value="1"/>
</dbReference>
<dbReference type="PANTHER" id="PTHR43382">
    <property type="entry name" value="PROLYL-TRNA SYNTHETASE"/>
    <property type="match status" value="1"/>
</dbReference>
<dbReference type="Pfam" id="PF03129">
    <property type="entry name" value="HGTP_anticodon"/>
    <property type="match status" value="1"/>
</dbReference>
<dbReference type="Pfam" id="PF09180">
    <property type="entry name" value="ProRS-C_1"/>
    <property type="match status" value="1"/>
</dbReference>
<dbReference type="Pfam" id="PF00587">
    <property type="entry name" value="tRNA-synt_2b"/>
    <property type="match status" value="1"/>
</dbReference>
<dbReference type="PRINTS" id="PR01046">
    <property type="entry name" value="TRNASYNTHPRO"/>
</dbReference>
<dbReference type="SMART" id="SM00946">
    <property type="entry name" value="ProRS-C_1"/>
    <property type="match status" value="1"/>
</dbReference>
<dbReference type="SUPFAM" id="SSF64586">
    <property type="entry name" value="C-terminal domain of ProRS"/>
    <property type="match status" value="1"/>
</dbReference>
<dbReference type="SUPFAM" id="SSF52954">
    <property type="entry name" value="Class II aaRS ABD-related"/>
    <property type="match status" value="1"/>
</dbReference>
<dbReference type="SUPFAM" id="SSF55681">
    <property type="entry name" value="Class II aaRS and biotin synthetases"/>
    <property type="match status" value="1"/>
</dbReference>
<dbReference type="PROSITE" id="PS50862">
    <property type="entry name" value="AA_TRNA_LIGASE_II"/>
    <property type="match status" value="1"/>
</dbReference>
<accession>Q6MTR9</accession>
<evidence type="ECO:0000255" key="1">
    <source>
        <dbReference type="HAMAP-Rule" id="MF_01571"/>
    </source>
</evidence>
<keyword id="KW-0030">Aminoacyl-tRNA synthetase</keyword>
<keyword id="KW-0067">ATP-binding</keyword>
<keyword id="KW-0963">Cytoplasm</keyword>
<keyword id="KW-0436">Ligase</keyword>
<keyword id="KW-0547">Nucleotide-binding</keyword>
<keyword id="KW-0648">Protein biosynthesis</keyword>
<keyword id="KW-1185">Reference proteome</keyword>
<protein>
    <recommendedName>
        <fullName evidence="1">Proline--tRNA ligase</fullName>
        <ecNumber evidence="1">6.1.1.15</ecNumber>
    </recommendedName>
    <alternativeName>
        <fullName evidence="1">Prolyl-tRNA synthetase</fullName>
        <shortName evidence="1">ProRS</shortName>
    </alternativeName>
</protein>
<proteinExistence type="inferred from homology"/>
<name>SYP_MYCMS</name>
<sequence>MKKQLDKITPRNIDFSQWYTDIVLNTKLASYGPVKGTMIFRPYGYRIWELIQKYLDEEFKKVNVDNVYFPLLIPESLFNKEKDHIEGFSPEIATVTRVGQKKLEENLFIRPTSEVVMMDYFSNEINSYRDLPLIYNQWCNVMRWEKTTRPFLRTSEFLWQEGHTIHSSYNEAENFCLKILNIYEKFAKEILLLPVICGKKTEKEKFAGAKDTYTIESLMFDGQALQCGTSHFFADNFTKVYDIKFQNKENKLEHAYSTSWGVSTRLIGALIMTHSDDNGLVLPSKISPIQIQIIQIKNTEQIDQVVENIKDKLSDYRIDVDNSDKSFGFKISEAEIKGIPIRIEIGPRDLENNQITISRRDQQENKIKIDYKDVKKVVDQMIKDYDLSLYNSALENRKNRTFKANTIEEYIEILKQNQGFVLVPFCGRVECEQDIKTKTATNSRCIPFDQKEVKAKCFNCKKDTCLQVIFARAY</sequence>